<feature type="chain" id="PRO_1000196968" description="Sugar fermentation stimulation protein homolog">
    <location>
        <begin position="1"/>
        <end position="242"/>
    </location>
</feature>
<dbReference type="EMBL" id="CP001287">
    <property type="protein sequence ID" value="ACK65748.1"/>
    <property type="molecule type" value="Genomic_DNA"/>
</dbReference>
<dbReference type="RefSeq" id="WP_012595021.1">
    <property type="nucleotide sequence ID" value="NC_011726.1"/>
</dbReference>
<dbReference type="SMR" id="B7JW59"/>
<dbReference type="STRING" id="41431.PCC8801_1698"/>
<dbReference type="KEGG" id="cyp:PCC8801_1698"/>
<dbReference type="eggNOG" id="COG1489">
    <property type="taxonomic scope" value="Bacteria"/>
</dbReference>
<dbReference type="HOGENOM" id="CLU_052299_2_0_3"/>
<dbReference type="OrthoDB" id="9802365at2"/>
<dbReference type="Proteomes" id="UP000008204">
    <property type="component" value="Chromosome"/>
</dbReference>
<dbReference type="GO" id="GO:0003677">
    <property type="term" value="F:DNA binding"/>
    <property type="evidence" value="ECO:0007669"/>
    <property type="project" value="InterPro"/>
</dbReference>
<dbReference type="CDD" id="cd22359">
    <property type="entry name" value="SfsA-like_bacterial"/>
    <property type="match status" value="1"/>
</dbReference>
<dbReference type="Gene3D" id="2.40.50.580">
    <property type="match status" value="1"/>
</dbReference>
<dbReference type="Gene3D" id="3.40.1350.60">
    <property type="match status" value="1"/>
</dbReference>
<dbReference type="HAMAP" id="MF_00095">
    <property type="entry name" value="SfsA"/>
    <property type="match status" value="1"/>
</dbReference>
<dbReference type="InterPro" id="IPR005224">
    <property type="entry name" value="SfsA"/>
</dbReference>
<dbReference type="InterPro" id="IPR040452">
    <property type="entry name" value="SfsA_C"/>
</dbReference>
<dbReference type="InterPro" id="IPR041465">
    <property type="entry name" value="SfsA_N"/>
</dbReference>
<dbReference type="NCBIfam" id="TIGR00230">
    <property type="entry name" value="sfsA"/>
    <property type="match status" value="1"/>
</dbReference>
<dbReference type="PANTHER" id="PTHR30545">
    <property type="entry name" value="SUGAR FERMENTATION STIMULATION PROTEIN A"/>
    <property type="match status" value="1"/>
</dbReference>
<dbReference type="PANTHER" id="PTHR30545:SF2">
    <property type="entry name" value="SUGAR FERMENTATION STIMULATION PROTEIN A"/>
    <property type="match status" value="1"/>
</dbReference>
<dbReference type="Pfam" id="PF03749">
    <property type="entry name" value="SfsA"/>
    <property type="match status" value="1"/>
</dbReference>
<dbReference type="Pfam" id="PF17746">
    <property type="entry name" value="SfsA_N"/>
    <property type="match status" value="1"/>
</dbReference>
<protein>
    <recommendedName>
        <fullName evidence="1">Sugar fermentation stimulation protein homolog</fullName>
    </recommendedName>
</protein>
<gene>
    <name evidence="1" type="primary">sfsA</name>
    <name type="ordered locus">PCC8801_1698</name>
</gene>
<reference key="1">
    <citation type="journal article" date="2011" name="MBio">
        <title>Novel metabolic attributes of the genus Cyanothece, comprising a group of unicellular nitrogen-fixing Cyanobacteria.</title>
        <authorList>
            <person name="Bandyopadhyay A."/>
            <person name="Elvitigala T."/>
            <person name="Welsh E."/>
            <person name="Stockel J."/>
            <person name="Liberton M."/>
            <person name="Min H."/>
            <person name="Sherman L.A."/>
            <person name="Pakrasi H.B."/>
        </authorList>
    </citation>
    <scope>NUCLEOTIDE SEQUENCE [LARGE SCALE GENOMIC DNA]</scope>
    <source>
        <strain>PCC 8801 / RF-1</strain>
    </source>
</reference>
<comment type="similarity">
    <text evidence="1">Belongs to the SfsA family.</text>
</comment>
<evidence type="ECO:0000255" key="1">
    <source>
        <dbReference type="HAMAP-Rule" id="MF_00095"/>
    </source>
</evidence>
<sequence length="242" mass="27439">MTSNLIYPYPTLIPGVLRQRYKRFFADIELASGEIITAHCPNTGPMTGVCTIGSPVYISPSDNPKRKLAYTWEMIQVNNTWVGINTAIPNKVIKYALENQWFAQLKERYTTVRSEVPYGKDNKSRVDFLLTQNEGKSPIYVEVKNTTLCQGEIALFPDTVTSRGQKHLRELMALLPDTKPIMLYFINRGDCYSFAPGDEFDPTYGTLLREAVKKGLEVLPCRFEVTPEGIHYLGLAEFLTKL</sequence>
<proteinExistence type="inferred from homology"/>
<name>SFSA_RIPO1</name>
<keyword id="KW-1185">Reference proteome</keyword>
<accession>B7JW59</accession>
<organism>
    <name type="scientific">Rippkaea orientalis (strain PCC 8801 / RF-1)</name>
    <name type="common">Cyanothece sp. (strain PCC 8801)</name>
    <dbReference type="NCBI Taxonomy" id="41431"/>
    <lineage>
        <taxon>Bacteria</taxon>
        <taxon>Bacillati</taxon>
        <taxon>Cyanobacteriota</taxon>
        <taxon>Cyanophyceae</taxon>
        <taxon>Oscillatoriophycideae</taxon>
        <taxon>Chroococcales</taxon>
        <taxon>Aphanothecaceae</taxon>
        <taxon>Rippkaea</taxon>
        <taxon>Rippkaea orientalis</taxon>
    </lineage>
</organism>